<gene>
    <name evidence="1" type="primary">rpmC</name>
    <name type="ordered locus">HNE_2843</name>
</gene>
<comment type="similarity">
    <text evidence="1">Belongs to the universal ribosomal protein uL29 family.</text>
</comment>
<organism>
    <name type="scientific">Hyphomonas neptunium (strain ATCC 15444)</name>
    <dbReference type="NCBI Taxonomy" id="228405"/>
    <lineage>
        <taxon>Bacteria</taxon>
        <taxon>Pseudomonadati</taxon>
        <taxon>Pseudomonadota</taxon>
        <taxon>Alphaproteobacteria</taxon>
        <taxon>Hyphomonadales</taxon>
        <taxon>Hyphomonadaceae</taxon>
        <taxon>Hyphomonas</taxon>
    </lineage>
</organism>
<sequence length="65" mass="7402">MKAADVRSKSVDQLSDELVKLKKEQFNLRFQAATGQLEKTGRVTEVRRDIARVKTILREKSQAGK</sequence>
<name>RL29_HYPNA</name>
<proteinExistence type="inferred from homology"/>
<feature type="chain" id="PRO_1000007499" description="Large ribosomal subunit protein uL29">
    <location>
        <begin position="1"/>
        <end position="65"/>
    </location>
</feature>
<dbReference type="EMBL" id="CP000158">
    <property type="protein sequence ID" value="ABI77863.1"/>
    <property type="molecule type" value="Genomic_DNA"/>
</dbReference>
<dbReference type="RefSeq" id="WP_011647818.1">
    <property type="nucleotide sequence ID" value="NC_008358.1"/>
</dbReference>
<dbReference type="SMR" id="Q0BYC2"/>
<dbReference type="STRING" id="228405.HNE_2843"/>
<dbReference type="KEGG" id="hne:HNE_2843"/>
<dbReference type="eggNOG" id="COG0255">
    <property type="taxonomic scope" value="Bacteria"/>
</dbReference>
<dbReference type="HOGENOM" id="CLU_158491_1_0_5"/>
<dbReference type="Proteomes" id="UP000001959">
    <property type="component" value="Chromosome"/>
</dbReference>
<dbReference type="GO" id="GO:0022625">
    <property type="term" value="C:cytosolic large ribosomal subunit"/>
    <property type="evidence" value="ECO:0007669"/>
    <property type="project" value="TreeGrafter"/>
</dbReference>
<dbReference type="GO" id="GO:0003735">
    <property type="term" value="F:structural constituent of ribosome"/>
    <property type="evidence" value="ECO:0007669"/>
    <property type="project" value="InterPro"/>
</dbReference>
<dbReference type="GO" id="GO:0006412">
    <property type="term" value="P:translation"/>
    <property type="evidence" value="ECO:0007669"/>
    <property type="project" value="UniProtKB-UniRule"/>
</dbReference>
<dbReference type="CDD" id="cd00427">
    <property type="entry name" value="Ribosomal_L29_HIP"/>
    <property type="match status" value="1"/>
</dbReference>
<dbReference type="FunFam" id="1.10.287.310:FF:000001">
    <property type="entry name" value="50S ribosomal protein L29"/>
    <property type="match status" value="1"/>
</dbReference>
<dbReference type="Gene3D" id="1.10.287.310">
    <property type="match status" value="1"/>
</dbReference>
<dbReference type="HAMAP" id="MF_00374">
    <property type="entry name" value="Ribosomal_uL29"/>
    <property type="match status" value="1"/>
</dbReference>
<dbReference type="InterPro" id="IPR050063">
    <property type="entry name" value="Ribosomal_protein_uL29"/>
</dbReference>
<dbReference type="InterPro" id="IPR001854">
    <property type="entry name" value="Ribosomal_uL29"/>
</dbReference>
<dbReference type="InterPro" id="IPR036049">
    <property type="entry name" value="Ribosomal_uL29_sf"/>
</dbReference>
<dbReference type="NCBIfam" id="TIGR00012">
    <property type="entry name" value="L29"/>
    <property type="match status" value="1"/>
</dbReference>
<dbReference type="PANTHER" id="PTHR10916">
    <property type="entry name" value="60S RIBOSOMAL PROTEIN L35/50S RIBOSOMAL PROTEIN L29"/>
    <property type="match status" value="1"/>
</dbReference>
<dbReference type="PANTHER" id="PTHR10916:SF0">
    <property type="entry name" value="LARGE RIBOSOMAL SUBUNIT PROTEIN UL29C"/>
    <property type="match status" value="1"/>
</dbReference>
<dbReference type="Pfam" id="PF00831">
    <property type="entry name" value="Ribosomal_L29"/>
    <property type="match status" value="1"/>
</dbReference>
<dbReference type="SUPFAM" id="SSF46561">
    <property type="entry name" value="Ribosomal protein L29 (L29p)"/>
    <property type="match status" value="1"/>
</dbReference>
<keyword id="KW-1185">Reference proteome</keyword>
<keyword id="KW-0687">Ribonucleoprotein</keyword>
<keyword id="KW-0689">Ribosomal protein</keyword>
<accession>Q0BYC2</accession>
<reference key="1">
    <citation type="journal article" date="2006" name="J. Bacteriol.">
        <title>Comparative genomic evidence for a close relationship between the dimorphic prosthecate bacteria Hyphomonas neptunium and Caulobacter crescentus.</title>
        <authorList>
            <person name="Badger J.H."/>
            <person name="Hoover T.R."/>
            <person name="Brun Y.V."/>
            <person name="Weiner R.M."/>
            <person name="Laub M.T."/>
            <person name="Alexandre G."/>
            <person name="Mrazek J."/>
            <person name="Ren Q."/>
            <person name="Paulsen I.T."/>
            <person name="Nelson K.E."/>
            <person name="Khouri H.M."/>
            <person name="Radune D."/>
            <person name="Sosa J."/>
            <person name="Dodson R.J."/>
            <person name="Sullivan S.A."/>
            <person name="Rosovitz M.J."/>
            <person name="Madupu R."/>
            <person name="Brinkac L.M."/>
            <person name="Durkin A.S."/>
            <person name="Daugherty S.C."/>
            <person name="Kothari S.P."/>
            <person name="Giglio M.G."/>
            <person name="Zhou L."/>
            <person name="Haft D.H."/>
            <person name="Selengut J.D."/>
            <person name="Davidsen T.M."/>
            <person name="Yang Q."/>
            <person name="Zafar N."/>
            <person name="Ward N.L."/>
        </authorList>
    </citation>
    <scope>NUCLEOTIDE SEQUENCE [LARGE SCALE GENOMIC DNA]</scope>
    <source>
        <strain>ATCC 15444</strain>
    </source>
</reference>
<evidence type="ECO:0000255" key="1">
    <source>
        <dbReference type="HAMAP-Rule" id="MF_00374"/>
    </source>
</evidence>
<evidence type="ECO:0000305" key="2"/>
<protein>
    <recommendedName>
        <fullName evidence="1">Large ribosomal subunit protein uL29</fullName>
    </recommendedName>
    <alternativeName>
        <fullName evidence="2">50S ribosomal protein L29</fullName>
    </alternativeName>
</protein>